<organism>
    <name type="scientific">Arabidopsis thaliana</name>
    <name type="common">Mouse-ear cress</name>
    <dbReference type="NCBI Taxonomy" id="3702"/>
    <lineage>
        <taxon>Eukaryota</taxon>
        <taxon>Viridiplantae</taxon>
        <taxon>Streptophyta</taxon>
        <taxon>Embryophyta</taxon>
        <taxon>Tracheophyta</taxon>
        <taxon>Spermatophyta</taxon>
        <taxon>Magnoliopsida</taxon>
        <taxon>eudicotyledons</taxon>
        <taxon>Gunneridae</taxon>
        <taxon>Pentapetalae</taxon>
        <taxon>rosids</taxon>
        <taxon>malvids</taxon>
        <taxon>Brassicales</taxon>
        <taxon>Brassicaceae</taxon>
        <taxon>Camelineae</taxon>
        <taxon>Arabidopsis</taxon>
    </lineage>
</organism>
<keyword id="KW-1185">Reference proteome</keyword>
<keyword id="KW-0964">Secreted</keyword>
<keyword id="KW-0713">Self-incompatibility</keyword>
<keyword id="KW-0732">Signal</keyword>
<proteinExistence type="evidence at transcript level"/>
<comment type="subcellular location">
    <subcellularLocation>
        <location evidence="4">Secreted</location>
    </subcellularLocation>
</comment>
<comment type="similarity">
    <text evidence="3">Belongs to the plant self-incompatibility (S1) protein family.</text>
</comment>
<comment type="sequence caution" evidence="3">
    <conflict type="erroneous termination">
        <sequence resource="EMBL-CDS" id="ABK28382"/>
    </conflict>
    <text>Extended C-terminus.</text>
</comment>
<reference key="1">
    <citation type="journal article" date="2000" name="Nature">
        <title>Sequence and analysis of chromosome 1 of the plant Arabidopsis thaliana.</title>
        <authorList>
            <person name="Theologis A."/>
            <person name="Ecker J.R."/>
            <person name="Palm C.J."/>
            <person name="Federspiel N.A."/>
            <person name="Kaul S."/>
            <person name="White O."/>
            <person name="Alonso J."/>
            <person name="Altafi H."/>
            <person name="Araujo R."/>
            <person name="Bowman C.L."/>
            <person name="Brooks S.Y."/>
            <person name="Buehler E."/>
            <person name="Chan A."/>
            <person name="Chao Q."/>
            <person name="Chen H."/>
            <person name="Cheuk R.F."/>
            <person name="Chin C.W."/>
            <person name="Chung M.K."/>
            <person name="Conn L."/>
            <person name="Conway A.B."/>
            <person name="Conway A.R."/>
            <person name="Creasy T.H."/>
            <person name="Dewar K."/>
            <person name="Dunn P."/>
            <person name="Etgu P."/>
            <person name="Feldblyum T.V."/>
            <person name="Feng J.-D."/>
            <person name="Fong B."/>
            <person name="Fujii C.Y."/>
            <person name="Gill J.E."/>
            <person name="Goldsmith A.D."/>
            <person name="Haas B."/>
            <person name="Hansen N.F."/>
            <person name="Hughes B."/>
            <person name="Huizar L."/>
            <person name="Hunter J.L."/>
            <person name="Jenkins J."/>
            <person name="Johnson-Hopson C."/>
            <person name="Khan S."/>
            <person name="Khaykin E."/>
            <person name="Kim C.J."/>
            <person name="Koo H.L."/>
            <person name="Kremenetskaia I."/>
            <person name="Kurtz D.B."/>
            <person name="Kwan A."/>
            <person name="Lam B."/>
            <person name="Langin-Hooper S."/>
            <person name="Lee A."/>
            <person name="Lee J.M."/>
            <person name="Lenz C.A."/>
            <person name="Li J.H."/>
            <person name="Li Y.-P."/>
            <person name="Lin X."/>
            <person name="Liu S.X."/>
            <person name="Liu Z.A."/>
            <person name="Luros J.S."/>
            <person name="Maiti R."/>
            <person name="Marziali A."/>
            <person name="Militscher J."/>
            <person name="Miranda M."/>
            <person name="Nguyen M."/>
            <person name="Nierman W.C."/>
            <person name="Osborne B.I."/>
            <person name="Pai G."/>
            <person name="Peterson J."/>
            <person name="Pham P.K."/>
            <person name="Rizzo M."/>
            <person name="Rooney T."/>
            <person name="Rowley D."/>
            <person name="Sakano H."/>
            <person name="Salzberg S.L."/>
            <person name="Schwartz J.R."/>
            <person name="Shinn P."/>
            <person name="Southwick A.M."/>
            <person name="Sun H."/>
            <person name="Tallon L.J."/>
            <person name="Tambunga G."/>
            <person name="Toriumi M.J."/>
            <person name="Town C.D."/>
            <person name="Utterback T."/>
            <person name="Van Aken S."/>
            <person name="Vaysberg M."/>
            <person name="Vysotskaia V.S."/>
            <person name="Walker M."/>
            <person name="Wu D."/>
            <person name="Yu G."/>
            <person name="Fraser C.M."/>
            <person name="Venter J.C."/>
            <person name="Davis R.W."/>
        </authorList>
    </citation>
    <scope>NUCLEOTIDE SEQUENCE [LARGE SCALE GENOMIC DNA]</scope>
    <source>
        <strain>cv. Columbia</strain>
    </source>
</reference>
<reference key="2">
    <citation type="journal article" date="2017" name="Plant J.">
        <title>Araport11: a complete reannotation of the Arabidopsis thaliana reference genome.</title>
        <authorList>
            <person name="Cheng C.Y."/>
            <person name="Krishnakumar V."/>
            <person name="Chan A.P."/>
            <person name="Thibaud-Nissen F."/>
            <person name="Schobel S."/>
            <person name="Town C.D."/>
        </authorList>
    </citation>
    <scope>GENOME REANNOTATION</scope>
    <source>
        <strain>cv. Columbia</strain>
    </source>
</reference>
<reference key="3">
    <citation type="journal article" date="2006" name="Plant Biotechnol. J.">
        <title>Simultaneous high-throughput recombinational cloning of open reading frames in closed and open configurations.</title>
        <authorList>
            <person name="Underwood B.A."/>
            <person name="Vanderhaeghen R."/>
            <person name="Whitford R."/>
            <person name="Town C.D."/>
            <person name="Hilson P."/>
        </authorList>
    </citation>
    <scope>NUCLEOTIDE SEQUENCE [LARGE SCALE MRNA]</scope>
    <source>
        <strain>cv. Columbia</strain>
    </source>
</reference>
<reference key="4">
    <citation type="submission" date="2006-07" db="EMBL/GenBank/DDBJ databases">
        <title>Arabidopsis ORF clones.</title>
        <authorList>
            <person name="Quinitio C."/>
            <person name="Chen H."/>
            <person name="Kim C.J."/>
            <person name="Shinn P."/>
            <person name="Ecker J.R."/>
        </authorList>
    </citation>
    <scope>NUCLEOTIDE SEQUENCE [LARGE SCALE MRNA]</scope>
    <source>
        <strain>cv. Columbia</strain>
    </source>
</reference>
<reference key="5">
    <citation type="submission" date="2002-03" db="EMBL/GenBank/DDBJ databases">
        <title>Full-length cDNA from Arabidopsis thaliana.</title>
        <authorList>
            <person name="Brover V.V."/>
            <person name="Troukhan M.E."/>
            <person name="Alexandrov N.A."/>
            <person name="Lu Y.-P."/>
            <person name="Flavell R.B."/>
            <person name="Feldmann K.A."/>
        </authorList>
    </citation>
    <scope>NUCLEOTIDE SEQUENCE [LARGE SCALE MRNA]</scope>
</reference>
<reference key="6">
    <citation type="journal article" date="1999" name="Plant Mol. Biol.">
        <title>Analysis of Arabidopsis genome sequence reveals a large new gene family in plants.</title>
        <authorList>
            <person name="Ride J.P."/>
            <person name="Davies E.M."/>
            <person name="Franklin F.C.H."/>
            <person name="Marshall D.F."/>
        </authorList>
    </citation>
    <scope>GENE FAMILY</scope>
    <scope>NOMENCLATURE</scope>
    <source>
        <strain>cv. Columbia</strain>
    </source>
</reference>
<gene>
    <name evidence="2" type="primary">SPH5</name>
    <name evidence="5" type="ordered locus">At1g04645</name>
    <name evidence="6" type="ORF">T1G11.10</name>
</gene>
<sequence>MEKVSIVCFFFFLLFGSGYGGLPPFWRATVVTMTNLIGGPPLTIHCKSKQDDLGIHVVPFKQEYHFKFQPNLWKSTLFFCSFQWDSQFKSFDIYDAQRDQGICDDCQWEIKPDGPCRLGKKAKCFPWK</sequence>
<name>SPH5_ARATH</name>
<protein>
    <recommendedName>
        <fullName evidence="2">S-protein homolog 5</fullName>
    </recommendedName>
</protein>
<evidence type="ECO:0000255" key="1"/>
<evidence type="ECO:0000303" key="2">
    <source>
    </source>
</evidence>
<evidence type="ECO:0000305" key="3"/>
<evidence type="ECO:0000305" key="4">
    <source>
    </source>
</evidence>
<evidence type="ECO:0000312" key="5">
    <source>
        <dbReference type="Araport" id="AT1G04645"/>
    </source>
</evidence>
<evidence type="ECO:0000312" key="6">
    <source>
        <dbReference type="EMBL" id="AAB80626.1"/>
    </source>
</evidence>
<dbReference type="EMBL" id="AC002376">
    <property type="protein sequence ID" value="AAB80626.1"/>
    <property type="molecule type" value="Genomic_DNA"/>
</dbReference>
<dbReference type="EMBL" id="CP002684">
    <property type="protein sequence ID" value="AEE27728.1"/>
    <property type="molecule type" value="Genomic_DNA"/>
</dbReference>
<dbReference type="EMBL" id="DQ446227">
    <property type="protein sequence ID" value="ABE65598.1"/>
    <property type="molecule type" value="mRNA"/>
</dbReference>
<dbReference type="EMBL" id="DQ652822">
    <property type="protein sequence ID" value="ABK28382.1"/>
    <property type="status" value="ALT_TERM"/>
    <property type="molecule type" value="mRNA"/>
</dbReference>
<dbReference type="EMBL" id="BT026094">
    <property type="protein sequence ID" value="ABG48450.1"/>
    <property type="molecule type" value="mRNA"/>
</dbReference>
<dbReference type="EMBL" id="AY086222">
    <property type="protein sequence ID" value="AAM64299.1"/>
    <property type="molecule type" value="mRNA"/>
</dbReference>
<dbReference type="PIR" id="C86179">
    <property type="entry name" value="C86179"/>
</dbReference>
<dbReference type="RefSeq" id="NP_563713.1">
    <property type="nucleotide sequence ID" value="NM_100344.1"/>
</dbReference>
<dbReference type="SMR" id="O23020"/>
<dbReference type="PaxDb" id="3702-AT1G04645.1"/>
<dbReference type="ProteomicsDB" id="245192"/>
<dbReference type="EnsemblPlants" id="AT1G04645.1">
    <property type="protein sequence ID" value="AT1G04645.1"/>
    <property type="gene ID" value="AT1G04645"/>
</dbReference>
<dbReference type="GeneID" id="839459"/>
<dbReference type="Gramene" id="AT1G04645.1">
    <property type="protein sequence ID" value="AT1G04645.1"/>
    <property type="gene ID" value="AT1G04645"/>
</dbReference>
<dbReference type="KEGG" id="ath:AT1G04645"/>
<dbReference type="Araport" id="AT1G04645"/>
<dbReference type="TAIR" id="AT1G04645"/>
<dbReference type="eggNOG" id="ENOG502S7CQ">
    <property type="taxonomic scope" value="Eukaryota"/>
</dbReference>
<dbReference type="HOGENOM" id="CLU_125658_0_1_1"/>
<dbReference type="InParanoid" id="O23020"/>
<dbReference type="OMA" id="PPFWPIT"/>
<dbReference type="OrthoDB" id="1900999at2759"/>
<dbReference type="PhylomeDB" id="O23020"/>
<dbReference type="PRO" id="PR:O23020"/>
<dbReference type="Proteomes" id="UP000006548">
    <property type="component" value="Chromosome 1"/>
</dbReference>
<dbReference type="ExpressionAtlas" id="O23020">
    <property type="expression patterns" value="baseline and differential"/>
</dbReference>
<dbReference type="GO" id="GO:0005576">
    <property type="term" value="C:extracellular region"/>
    <property type="evidence" value="ECO:0007669"/>
    <property type="project" value="UniProtKB-SubCell"/>
</dbReference>
<dbReference type="GO" id="GO:0060320">
    <property type="term" value="P:rejection of self pollen"/>
    <property type="evidence" value="ECO:0007669"/>
    <property type="project" value="UniProtKB-KW"/>
</dbReference>
<dbReference type="InterPro" id="IPR010264">
    <property type="entry name" value="Self-incomp_S1"/>
</dbReference>
<dbReference type="PANTHER" id="PTHR31232">
    <property type="match status" value="1"/>
</dbReference>
<dbReference type="PANTHER" id="PTHR31232:SF43">
    <property type="entry name" value="S-PROTEIN HOMOLOG 29-RELATED"/>
    <property type="match status" value="1"/>
</dbReference>
<dbReference type="Pfam" id="PF05938">
    <property type="entry name" value="Self-incomp_S1"/>
    <property type="match status" value="1"/>
</dbReference>
<feature type="signal peptide" evidence="1">
    <location>
        <begin position="1"/>
        <end position="20"/>
    </location>
</feature>
<feature type="chain" id="PRO_5009340812" description="S-protein homolog 5">
    <location>
        <begin position="21"/>
        <end position="128"/>
    </location>
</feature>
<feature type="sequence conflict" description="In Ref. 5; AAM64299." evidence="3" ref="5">
    <original>L</original>
    <variation>F</variation>
    <location>
        <position position="77"/>
    </location>
</feature>
<accession>O23020</accession>
<accession>A0ME54</accession>
<accession>Q8LD41</accession>